<reference key="1">
    <citation type="journal article" date="1999" name="Nature">
        <title>Sequence and analysis of chromosome 4 of the plant Arabidopsis thaliana.</title>
        <authorList>
            <person name="Mayer K.F.X."/>
            <person name="Schueller C."/>
            <person name="Wambutt R."/>
            <person name="Murphy G."/>
            <person name="Volckaert G."/>
            <person name="Pohl T."/>
            <person name="Duesterhoeft A."/>
            <person name="Stiekema W."/>
            <person name="Entian K.-D."/>
            <person name="Terryn N."/>
            <person name="Harris B."/>
            <person name="Ansorge W."/>
            <person name="Brandt P."/>
            <person name="Grivell L.A."/>
            <person name="Rieger M."/>
            <person name="Weichselgartner M."/>
            <person name="de Simone V."/>
            <person name="Obermaier B."/>
            <person name="Mache R."/>
            <person name="Mueller M."/>
            <person name="Kreis M."/>
            <person name="Delseny M."/>
            <person name="Puigdomenech P."/>
            <person name="Watson M."/>
            <person name="Schmidtheini T."/>
            <person name="Reichert B."/>
            <person name="Portetelle D."/>
            <person name="Perez-Alonso M."/>
            <person name="Boutry M."/>
            <person name="Bancroft I."/>
            <person name="Vos P."/>
            <person name="Hoheisel J."/>
            <person name="Zimmermann W."/>
            <person name="Wedler H."/>
            <person name="Ridley P."/>
            <person name="Langham S.-A."/>
            <person name="McCullagh B."/>
            <person name="Bilham L."/>
            <person name="Robben J."/>
            <person name="van der Schueren J."/>
            <person name="Grymonprez B."/>
            <person name="Chuang Y.-J."/>
            <person name="Vandenbussche F."/>
            <person name="Braeken M."/>
            <person name="Weltjens I."/>
            <person name="Voet M."/>
            <person name="Bastiaens I."/>
            <person name="Aert R."/>
            <person name="Defoor E."/>
            <person name="Weitzenegger T."/>
            <person name="Bothe G."/>
            <person name="Ramsperger U."/>
            <person name="Hilbert H."/>
            <person name="Braun M."/>
            <person name="Holzer E."/>
            <person name="Brandt A."/>
            <person name="Peters S."/>
            <person name="van Staveren M."/>
            <person name="Dirkse W."/>
            <person name="Mooijman P."/>
            <person name="Klein Lankhorst R."/>
            <person name="Rose M."/>
            <person name="Hauf J."/>
            <person name="Koetter P."/>
            <person name="Berneiser S."/>
            <person name="Hempel S."/>
            <person name="Feldpausch M."/>
            <person name="Lamberth S."/>
            <person name="Van den Daele H."/>
            <person name="De Keyser A."/>
            <person name="Buysshaert C."/>
            <person name="Gielen J."/>
            <person name="Villarroel R."/>
            <person name="De Clercq R."/>
            <person name="van Montagu M."/>
            <person name="Rogers J."/>
            <person name="Cronin A."/>
            <person name="Quail M.A."/>
            <person name="Bray-Allen S."/>
            <person name="Clark L."/>
            <person name="Doggett J."/>
            <person name="Hall S."/>
            <person name="Kay M."/>
            <person name="Lennard N."/>
            <person name="McLay K."/>
            <person name="Mayes R."/>
            <person name="Pettett A."/>
            <person name="Rajandream M.A."/>
            <person name="Lyne M."/>
            <person name="Benes V."/>
            <person name="Rechmann S."/>
            <person name="Borkova D."/>
            <person name="Bloecker H."/>
            <person name="Scharfe M."/>
            <person name="Grimm M."/>
            <person name="Loehnert T.-H."/>
            <person name="Dose S."/>
            <person name="de Haan M."/>
            <person name="Maarse A.C."/>
            <person name="Schaefer M."/>
            <person name="Mueller-Auer S."/>
            <person name="Gabel C."/>
            <person name="Fuchs M."/>
            <person name="Fartmann B."/>
            <person name="Granderath K."/>
            <person name="Dauner D."/>
            <person name="Herzl A."/>
            <person name="Neumann S."/>
            <person name="Argiriou A."/>
            <person name="Vitale D."/>
            <person name="Liguori R."/>
            <person name="Piravandi E."/>
            <person name="Massenet O."/>
            <person name="Quigley F."/>
            <person name="Clabauld G."/>
            <person name="Muendlein A."/>
            <person name="Felber R."/>
            <person name="Schnabl S."/>
            <person name="Hiller R."/>
            <person name="Schmidt W."/>
            <person name="Lecharny A."/>
            <person name="Aubourg S."/>
            <person name="Chefdor F."/>
            <person name="Cooke R."/>
            <person name="Berger C."/>
            <person name="Monfort A."/>
            <person name="Casacuberta E."/>
            <person name="Gibbons T."/>
            <person name="Weber N."/>
            <person name="Vandenbol M."/>
            <person name="Bargues M."/>
            <person name="Terol J."/>
            <person name="Torres A."/>
            <person name="Perez-Perez A."/>
            <person name="Purnelle B."/>
            <person name="Bent E."/>
            <person name="Johnson S."/>
            <person name="Tacon D."/>
            <person name="Jesse T."/>
            <person name="Heijnen L."/>
            <person name="Schwarz S."/>
            <person name="Scholler P."/>
            <person name="Heber S."/>
            <person name="Francs P."/>
            <person name="Bielke C."/>
            <person name="Frishman D."/>
            <person name="Haase D."/>
            <person name="Lemcke K."/>
            <person name="Mewes H.-W."/>
            <person name="Stocker S."/>
            <person name="Zaccaria P."/>
            <person name="Bevan M."/>
            <person name="Wilson R.K."/>
            <person name="de la Bastide M."/>
            <person name="Habermann K."/>
            <person name="Parnell L."/>
            <person name="Dedhia N."/>
            <person name="Gnoj L."/>
            <person name="Schutz K."/>
            <person name="Huang E."/>
            <person name="Spiegel L."/>
            <person name="Sekhon M."/>
            <person name="Murray J."/>
            <person name="Sheet P."/>
            <person name="Cordes M."/>
            <person name="Abu-Threideh J."/>
            <person name="Stoneking T."/>
            <person name="Kalicki J."/>
            <person name="Graves T."/>
            <person name="Harmon G."/>
            <person name="Edwards J."/>
            <person name="Latreille P."/>
            <person name="Courtney L."/>
            <person name="Cloud J."/>
            <person name="Abbott A."/>
            <person name="Scott K."/>
            <person name="Johnson D."/>
            <person name="Minx P."/>
            <person name="Bentley D."/>
            <person name="Fulton B."/>
            <person name="Miller N."/>
            <person name="Greco T."/>
            <person name="Kemp K."/>
            <person name="Kramer J."/>
            <person name="Fulton L."/>
            <person name="Mardis E."/>
            <person name="Dante M."/>
            <person name="Pepin K."/>
            <person name="Hillier L.W."/>
            <person name="Nelson J."/>
            <person name="Spieth J."/>
            <person name="Ryan E."/>
            <person name="Andrews S."/>
            <person name="Geisel C."/>
            <person name="Layman D."/>
            <person name="Du H."/>
            <person name="Ali J."/>
            <person name="Berghoff A."/>
            <person name="Jones K."/>
            <person name="Drone K."/>
            <person name="Cotton M."/>
            <person name="Joshu C."/>
            <person name="Antonoiu B."/>
            <person name="Zidanic M."/>
            <person name="Strong C."/>
            <person name="Sun H."/>
            <person name="Lamar B."/>
            <person name="Yordan C."/>
            <person name="Ma P."/>
            <person name="Zhong J."/>
            <person name="Preston R."/>
            <person name="Vil D."/>
            <person name="Shekher M."/>
            <person name="Matero A."/>
            <person name="Shah R."/>
            <person name="Swaby I.K."/>
            <person name="O'Shaughnessy A."/>
            <person name="Rodriguez M."/>
            <person name="Hoffman J."/>
            <person name="Till S."/>
            <person name="Granat S."/>
            <person name="Shohdy N."/>
            <person name="Hasegawa A."/>
            <person name="Hameed A."/>
            <person name="Lodhi M."/>
            <person name="Johnson A."/>
            <person name="Chen E."/>
            <person name="Marra M.A."/>
            <person name="Martienssen R."/>
            <person name="McCombie W.R."/>
        </authorList>
    </citation>
    <scope>NUCLEOTIDE SEQUENCE [LARGE SCALE GENOMIC DNA]</scope>
    <source>
        <strain>cv. Columbia</strain>
    </source>
</reference>
<reference key="2">
    <citation type="journal article" date="2017" name="Plant J.">
        <title>Araport11: a complete reannotation of the Arabidopsis thaliana reference genome.</title>
        <authorList>
            <person name="Cheng C.Y."/>
            <person name="Krishnakumar V."/>
            <person name="Chan A.P."/>
            <person name="Thibaud-Nissen F."/>
            <person name="Schobel S."/>
            <person name="Town C.D."/>
        </authorList>
    </citation>
    <scope>GENOME REANNOTATION</scope>
    <source>
        <strain>cv. Columbia</strain>
    </source>
</reference>
<reference key="3">
    <citation type="journal article" date="2003" name="Science">
        <title>Empirical analysis of transcriptional activity in the Arabidopsis genome.</title>
        <authorList>
            <person name="Yamada K."/>
            <person name="Lim J."/>
            <person name="Dale J.M."/>
            <person name="Chen H."/>
            <person name="Shinn P."/>
            <person name="Palm C.J."/>
            <person name="Southwick A.M."/>
            <person name="Wu H.C."/>
            <person name="Kim C.J."/>
            <person name="Nguyen M."/>
            <person name="Pham P.K."/>
            <person name="Cheuk R.F."/>
            <person name="Karlin-Newmann G."/>
            <person name="Liu S.X."/>
            <person name="Lam B."/>
            <person name="Sakano H."/>
            <person name="Wu T."/>
            <person name="Yu G."/>
            <person name="Miranda M."/>
            <person name="Quach H.L."/>
            <person name="Tripp M."/>
            <person name="Chang C.H."/>
            <person name="Lee J.M."/>
            <person name="Toriumi M.J."/>
            <person name="Chan M.M."/>
            <person name="Tang C.C."/>
            <person name="Onodera C.S."/>
            <person name="Deng J.M."/>
            <person name="Akiyama K."/>
            <person name="Ansari Y."/>
            <person name="Arakawa T."/>
            <person name="Banh J."/>
            <person name="Banno F."/>
            <person name="Bowser L."/>
            <person name="Brooks S.Y."/>
            <person name="Carninci P."/>
            <person name="Chao Q."/>
            <person name="Choy N."/>
            <person name="Enju A."/>
            <person name="Goldsmith A.D."/>
            <person name="Gurjal M."/>
            <person name="Hansen N.F."/>
            <person name="Hayashizaki Y."/>
            <person name="Johnson-Hopson C."/>
            <person name="Hsuan V.W."/>
            <person name="Iida K."/>
            <person name="Karnes M."/>
            <person name="Khan S."/>
            <person name="Koesema E."/>
            <person name="Ishida J."/>
            <person name="Jiang P.X."/>
            <person name="Jones T."/>
            <person name="Kawai J."/>
            <person name="Kamiya A."/>
            <person name="Meyers C."/>
            <person name="Nakajima M."/>
            <person name="Narusaka M."/>
            <person name="Seki M."/>
            <person name="Sakurai T."/>
            <person name="Satou M."/>
            <person name="Tamse R."/>
            <person name="Vaysberg M."/>
            <person name="Wallender E.K."/>
            <person name="Wong C."/>
            <person name="Yamamura Y."/>
            <person name="Yuan S."/>
            <person name="Shinozaki K."/>
            <person name="Davis R.W."/>
            <person name="Theologis A."/>
            <person name="Ecker J.R."/>
        </authorList>
    </citation>
    <scope>NUCLEOTIDE SEQUENCE [LARGE SCALE MRNA] (ISOFORM 1)</scope>
    <source>
        <strain>cv. Columbia</strain>
    </source>
</reference>
<reference key="4">
    <citation type="submission" date="2002-03" db="EMBL/GenBank/DDBJ databases">
        <title>Full-length cDNA from Arabidopsis thaliana.</title>
        <authorList>
            <person name="Brover V.V."/>
            <person name="Troukhan M.E."/>
            <person name="Alexandrov N.A."/>
            <person name="Lu Y.-P."/>
            <person name="Flavell R.B."/>
            <person name="Feldmann K.A."/>
        </authorList>
    </citation>
    <scope>NUCLEOTIDE SEQUENCE [LARGE SCALE MRNA] (ISOFORM 1)</scope>
</reference>
<reference key="5">
    <citation type="journal article" date="2013" name="J. Biol. Chem.">
        <title>Arabidopsis calmodulin-binding protein IQ67-domain 1 localizes to microtubules and interacts with kinesin light chain-related protein-1.</title>
        <authorList>
            <person name="Buerstenbinder K."/>
            <person name="Savchenko T."/>
            <person name="Mueller J."/>
            <person name="Adamson A.W."/>
            <person name="Stamm G."/>
            <person name="Kwong R."/>
            <person name="Zipp B.J."/>
            <person name="Dinesh D.C."/>
            <person name="Abel S."/>
        </authorList>
    </citation>
    <scope>INTERACTION WITH IQD1</scope>
    <scope>SUBCELLULAR LOCATION</scope>
    <scope>GENE FAMILY</scope>
    <scope>NOMENCLATURE</scope>
    <source>
        <strain>cv. Columbia</strain>
    </source>
</reference>
<reference key="6">
    <citation type="journal article" date="2013" name="Plant Signal. Behav.">
        <title>The emerging function of IQD proteins as scaffolds in cellular signaling and trafficking.</title>
        <authorList>
            <person name="Abel S."/>
            <person name="Buerstenbinder K."/>
            <person name="Mueller J."/>
        </authorList>
    </citation>
    <scope>REVIEW</scope>
</reference>
<comment type="subunit">
    <text evidence="3">Interacts with IQD1.</text>
</comment>
<comment type="subcellular location">
    <subcellularLocation>
        <location evidence="3">Cytoplasm</location>
        <location evidence="3">Cytoskeleton</location>
    </subcellularLocation>
    <subcellularLocation>
        <location evidence="3">Cytoplasm</location>
    </subcellularLocation>
    <text evidence="3">Recruited by IQD1 to microtubules.</text>
</comment>
<comment type="alternative products">
    <event type="alternative splicing"/>
    <isoform>
        <id>O81629-1</id>
        <name>1</name>
        <sequence type="displayed"/>
    </isoform>
    <isoform>
        <id>O81629-2</id>
        <name>2</name>
        <sequence type="described" ref="VSP_058634"/>
    </isoform>
</comment>
<comment type="similarity">
    <text evidence="5">Belongs to the kinesin light chain family.</text>
</comment>
<comment type="sequence caution" evidence="5">
    <conflict type="erroneous initiation">
        <sequence resource="EMBL-CDS" id="AAM63491"/>
    </conflict>
    <text>Truncated N-terminus.</text>
</comment>
<keyword id="KW-0025">Alternative splicing</keyword>
<keyword id="KW-0963">Cytoplasm</keyword>
<keyword id="KW-0206">Cytoskeleton</keyword>
<keyword id="KW-1185">Reference proteome</keyword>
<keyword id="KW-0677">Repeat</keyword>
<keyword id="KW-0802">TPR repeat</keyword>
<proteinExistence type="evidence at protein level"/>
<evidence type="ECO:0000255" key="1">
    <source>
        <dbReference type="PROSITE-ProRule" id="PRU00339"/>
    </source>
</evidence>
<evidence type="ECO:0000256" key="2">
    <source>
        <dbReference type="SAM" id="MobiDB-lite"/>
    </source>
</evidence>
<evidence type="ECO:0000269" key="3">
    <source>
    </source>
</evidence>
<evidence type="ECO:0000303" key="4">
    <source>
    </source>
</evidence>
<evidence type="ECO:0000305" key="5"/>
<evidence type="ECO:0000312" key="6">
    <source>
        <dbReference type="Araport" id="AT4G10840"/>
    </source>
</evidence>
<evidence type="ECO:0000312" key="7">
    <source>
        <dbReference type="EMBL" id="AAC33943.1"/>
    </source>
</evidence>
<evidence type="ECO:0000312" key="8">
    <source>
        <dbReference type="EMBL" id="CAB40052.1"/>
    </source>
</evidence>
<dbReference type="EMBL" id="AF080118">
    <property type="protein sequence ID" value="AAC33943.1"/>
    <property type="molecule type" value="Genomic_DNA"/>
</dbReference>
<dbReference type="EMBL" id="AL049525">
    <property type="protein sequence ID" value="CAB40052.1"/>
    <property type="molecule type" value="Genomic_DNA"/>
</dbReference>
<dbReference type="EMBL" id="AL161518">
    <property type="protein sequence ID" value="CAB81185.1"/>
    <property type="molecule type" value="Genomic_DNA"/>
</dbReference>
<dbReference type="EMBL" id="CP002687">
    <property type="protein sequence ID" value="AEE82933.1"/>
    <property type="molecule type" value="Genomic_DNA"/>
</dbReference>
<dbReference type="EMBL" id="CP002687">
    <property type="protein sequence ID" value="AEE82934.1"/>
    <property type="molecule type" value="Genomic_DNA"/>
</dbReference>
<dbReference type="EMBL" id="AY072170">
    <property type="protein sequence ID" value="AAL59992.1"/>
    <property type="molecule type" value="mRNA"/>
</dbReference>
<dbReference type="EMBL" id="AY090361">
    <property type="protein sequence ID" value="AAL91265.1"/>
    <property type="molecule type" value="mRNA"/>
</dbReference>
<dbReference type="EMBL" id="BT000987">
    <property type="protein sequence ID" value="AAN41387.1"/>
    <property type="molecule type" value="mRNA"/>
</dbReference>
<dbReference type="EMBL" id="AY086489">
    <property type="protein sequence ID" value="AAM63491.1"/>
    <property type="status" value="ALT_INIT"/>
    <property type="molecule type" value="mRNA"/>
</dbReference>
<dbReference type="PIR" id="T01892">
    <property type="entry name" value="T01892"/>
</dbReference>
<dbReference type="RefSeq" id="NP_192822.1">
    <molecule id="O81629-1"/>
    <property type="nucleotide sequence ID" value="NM_117152.5"/>
</dbReference>
<dbReference type="RefSeq" id="NP_974530.1">
    <molecule id="O81629-2"/>
    <property type="nucleotide sequence ID" value="NM_202801.1"/>
</dbReference>
<dbReference type="SMR" id="O81629"/>
<dbReference type="FunCoup" id="O81629">
    <property type="interactions" value="828"/>
</dbReference>
<dbReference type="IntAct" id="O81629">
    <property type="interactions" value="6"/>
</dbReference>
<dbReference type="STRING" id="3702.O81629"/>
<dbReference type="GlyGen" id="O81629">
    <property type="glycosylation" value="1 site"/>
</dbReference>
<dbReference type="iPTMnet" id="O81629"/>
<dbReference type="PaxDb" id="3702-AT4G10840.1"/>
<dbReference type="ProteomicsDB" id="230371">
    <molecule id="O81629-1"/>
</dbReference>
<dbReference type="EnsemblPlants" id="AT4G10840.1">
    <molecule id="O81629-1"/>
    <property type="protein sequence ID" value="AT4G10840.1"/>
    <property type="gene ID" value="AT4G10840"/>
</dbReference>
<dbReference type="EnsemblPlants" id="AT4G10840.2">
    <molecule id="O81629-2"/>
    <property type="protein sequence ID" value="AT4G10840.2"/>
    <property type="gene ID" value="AT4G10840"/>
</dbReference>
<dbReference type="GeneID" id="826680"/>
<dbReference type="Gramene" id="AT4G10840.1">
    <molecule id="O81629-1"/>
    <property type="protein sequence ID" value="AT4G10840.1"/>
    <property type="gene ID" value="AT4G10840"/>
</dbReference>
<dbReference type="Gramene" id="AT4G10840.2">
    <molecule id="O81629-2"/>
    <property type="protein sequence ID" value="AT4G10840.2"/>
    <property type="gene ID" value="AT4G10840"/>
</dbReference>
<dbReference type="KEGG" id="ath:AT4G10840"/>
<dbReference type="Araport" id="AT4G10840"/>
<dbReference type="TAIR" id="AT4G10840">
    <property type="gene designation" value="KLCR1"/>
</dbReference>
<dbReference type="eggNOG" id="KOG1840">
    <property type="taxonomic scope" value="Eukaryota"/>
</dbReference>
<dbReference type="HOGENOM" id="CLU_021284_1_0_1"/>
<dbReference type="InParanoid" id="O81629"/>
<dbReference type="OMA" id="MAMIANA"/>
<dbReference type="OrthoDB" id="5986190at2759"/>
<dbReference type="PhylomeDB" id="O81629"/>
<dbReference type="PRO" id="PR:O81629"/>
<dbReference type="Proteomes" id="UP000006548">
    <property type="component" value="Chromosome 4"/>
</dbReference>
<dbReference type="ExpressionAtlas" id="O81629">
    <property type="expression patterns" value="baseline and differential"/>
</dbReference>
<dbReference type="GO" id="GO:0005737">
    <property type="term" value="C:cytoplasm"/>
    <property type="evidence" value="ECO:0000314"/>
    <property type="project" value="UniProtKB"/>
</dbReference>
<dbReference type="GO" id="GO:0005829">
    <property type="term" value="C:cytosol"/>
    <property type="evidence" value="ECO:0007005"/>
    <property type="project" value="TAIR"/>
</dbReference>
<dbReference type="GO" id="GO:0005874">
    <property type="term" value="C:microtubule"/>
    <property type="evidence" value="ECO:0000314"/>
    <property type="project" value="UniProtKB"/>
</dbReference>
<dbReference type="FunFam" id="1.25.40.10:FF:000593">
    <property type="entry name" value="Protein KINESIN LIGHT CHAIN-RELATED 1"/>
    <property type="match status" value="1"/>
</dbReference>
<dbReference type="FunFam" id="1.25.40.10:FF:000716">
    <property type="entry name" value="Protein KINESIN LIGHT CHAIN-RELATED 2"/>
    <property type="match status" value="1"/>
</dbReference>
<dbReference type="FunFam" id="1.25.40.10:FF:001025">
    <property type="entry name" value="Protein KINESIN LIGHT CHAIN-RELATED 2"/>
    <property type="match status" value="1"/>
</dbReference>
<dbReference type="Gene3D" id="1.25.40.10">
    <property type="entry name" value="Tetratricopeptide repeat domain"/>
    <property type="match status" value="3"/>
</dbReference>
<dbReference type="InterPro" id="IPR011990">
    <property type="entry name" value="TPR-like_helical_dom_sf"/>
</dbReference>
<dbReference type="InterPro" id="IPR019734">
    <property type="entry name" value="TPR_rpt"/>
</dbReference>
<dbReference type="PANTHER" id="PTHR46284:SF2">
    <property type="entry name" value="PROTEIN KINESIN LIGHT CHAIN-RELATED 1"/>
    <property type="match status" value="1"/>
</dbReference>
<dbReference type="PANTHER" id="PTHR46284">
    <property type="entry name" value="PROTEIN KINESIN LIGHT CHAIN-RELATED 3"/>
    <property type="match status" value="1"/>
</dbReference>
<dbReference type="Pfam" id="PF13424">
    <property type="entry name" value="TPR_12"/>
    <property type="match status" value="3"/>
</dbReference>
<dbReference type="SMART" id="SM00028">
    <property type="entry name" value="TPR"/>
    <property type="match status" value="9"/>
</dbReference>
<dbReference type="SUPFAM" id="SSF48452">
    <property type="entry name" value="TPR-like"/>
    <property type="match status" value="3"/>
</dbReference>
<dbReference type="PROSITE" id="PS50005">
    <property type="entry name" value="TPR"/>
    <property type="match status" value="9"/>
</dbReference>
<dbReference type="PROSITE" id="PS50293">
    <property type="entry name" value="TPR_REGION"/>
    <property type="match status" value="1"/>
</dbReference>
<feature type="chain" id="PRO_0000438247" description="Protein KINESIN LIGHT CHAIN-RELATED 1">
    <location>
        <begin position="1"/>
        <end position="609"/>
    </location>
</feature>
<feature type="repeat" description="TPR 1" evidence="1">
    <location>
        <begin position="140"/>
        <end position="173"/>
    </location>
</feature>
<feature type="repeat" description="TPR 2" evidence="1">
    <location>
        <begin position="183"/>
        <end position="216"/>
    </location>
</feature>
<feature type="repeat" description="TPR 3" evidence="1">
    <location>
        <begin position="225"/>
        <end position="258"/>
    </location>
</feature>
<feature type="repeat" description="TPR 4" evidence="1">
    <location>
        <begin position="267"/>
        <end position="301"/>
    </location>
</feature>
<feature type="repeat" description="TPR 5" evidence="1">
    <location>
        <begin position="307"/>
        <end position="340"/>
    </location>
</feature>
<feature type="repeat" description="TPR 6" evidence="1">
    <location>
        <begin position="349"/>
        <end position="382"/>
    </location>
</feature>
<feature type="repeat" description="TPR 7" evidence="1">
    <location>
        <begin position="392"/>
        <end position="425"/>
    </location>
</feature>
<feature type="repeat" description="TPR 8" evidence="1">
    <location>
        <begin position="433"/>
        <end position="466"/>
    </location>
</feature>
<feature type="repeat" description="TPR 9" evidence="1">
    <location>
        <begin position="474"/>
        <end position="507"/>
    </location>
</feature>
<feature type="repeat" description="TPR 10" evidence="1">
    <location>
        <begin position="516"/>
        <end position="549"/>
    </location>
</feature>
<feature type="region of interest" description="Disordered" evidence="2">
    <location>
        <begin position="1"/>
        <end position="77"/>
    </location>
</feature>
<feature type="region of interest" description="Disordered" evidence="2">
    <location>
        <begin position="582"/>
        <end position="609"/>
    </location>
</feature>
<feature type="compositionally biased region" description="Low complexity" evidence="2">
    <location>
        <begin position="38"/>
        <end position="55"/>
    </location>
</feature>
<feature type="splice variant" id="VSP_058634" description="In isoform 2.">
    <location>
        <begin position="532"/>
        <end position="609"/>
    </location>
</feature>
<protein>
    <recommendedName>
        <fullName evidence="4">Protein KINESIN LIGHT CHAIN-RELATED 1</fullName>
    </recommendedName>
</protein>
<name>KLCR1_ARATH</name>
<sequence length="609" mass="66281">MPAMPGLVSVKTPSDTPPLRVAVPDTQPLSNPPRTPMKKTPSSTPSRSKPSPNRSTGKKDSPTVSSSTAAVIDVDDPSLDNPDLGPFLLKLARDAIASGEGPNKALDYAIRATKSFERCCAAVAPPIPGGSDGGPVLDLAMSLHVLAAIYCSLGRFDEAVPPLERAIQVPDPTRGPDHSLAAFSGHMQLGDTLSMLGQIDRSIACYEEGLKIQIQTLGDTDPRVGETCRYLAEAYVQAMQFNKAEELCKKTLEIHRAHSEPASLEEAADRRLMAIICEAKGDYENALEHLVLASMAMIASGQESEVASIDVSIGNIYMSLCRFDEAVFSYQKALTVFKASKGETHPTVASVFVRLAELYHRTGKLRESKSYCENALRIYNKPVPGTTVEEIAGGLTEISAIYESVDEPEEALKLLQKSMKLLEDKPGQQSAIAGLEARMGVMYYTVGRYEDARNAFESAVTKLRAAGEKSAFFGVVLNQMGLACVQLFKIDEAGELFEEARGILEQERGPCDQDTLGVYSNLAATYDAMGRIEDAIEILEQVLKLREEKLGTANPDFEDEKKRLAELLKEAGRSRNYKAKSLQNLIDPNARPPKKESSAKKWPSLGFKF</sequence>
<accession>O81629</accession>
<accession>F4JMG6</accession>
<accession>Q8LCN6</accession>
<organism>
    <name type="scientific">Arabidopsis thaliana</name>
    <name type="common">Mouse-ear cress</name>
    <dbReference type="NCBI Taxonomy" id="3702"/>
    <lineage>
        <taxon>Eukaryota</taxon>
        <taxon>Viridiplantae</taxon>
        <taxon>Streptophyta</taxon>
        <taxon>Embryophyta</taxon>
        <taxon>Tracheophyta</taxon>
        <taxon>Spermatophyta</taxon>
        <taxon>Magnoliopsida</taxon>
        <taxon>eudicotyledons</taxon>
        <taxon>Gunneridae</taxon>
        <taxon>Pentapetalae</taxon>
        <taxon>rosids</taxon>
        <taxon>malvids</taxon>
        <taxon>Brassicales</taxon>
        <taxon>Brassicaceae</taxon>
        <taxon>Camelineae</taxon>
        <taxon>Arabidopsis</taxon>
    </lineage>
</organism>
<gene>
    <name evidence="4" type="primary">KLCR1</name>
    <name evidence="6" type="ordered locus">At4g10840</name>
    <name evidence="8" type="ORF">F25I24.50</name>
    <name evidence="7" type="ORF">F8M12.21</name>
</gene>